<comment type="function">
    <text evidence="1">Involved in the binding of tRNA to the ribosomes.</text>
</comment>
<comment type="subunit">
    <text evidence="1">Part of the 30S ribosomal subunit.</text>
</comment>
<comment type="similarity">
    <text evidence="1">Belongs to the universal ribosomal protein uS10 family.</text>
</comment>
<organism>
    <name type="scientific">Neisseria meningitidis serogroup B (strain ATCC BAA-335 / MC58)</name>
    <dbReference type="NCBI Taxonomy" id="122586"/>
    <lineage>
        <taxon>Bacteria</taxon>
        <taxon>Pseudomonadati</taxon>
        <taxon>Pseudomonadota</taxon>
        <taxon>Betaproteobacteria</taxon>
        <taxon>Neisseriales</taxon>
        <taxon>Neisseriaceae</taxon>
        <taxon>Neisseria</taxon>
    </lineage>
</organism>
<keyword id="KW-1185">Reference proteome</keyword>
<keyword id="KW-0687">Ribonucleoprotein</keyword>
<keyword id="KW-0689">Ribosomal protein</keyword>
<reference key="1">
    <citation type="journal article" date="2000" name="Science">
        <title>Complete genome sequence of Neisseria meningitidis serogroup B strain MC58.</title>
        <authorList>
            <person name="Tettelin H."/>
            <person name="Saunders N.J."/>
            <person name="Heidelberg J.F."/>
            <person name="Jeffries A.C."/>
            <person name="Nelson K.E."/>
            <person name="Eisen J.A."/>
            <person name="Ketchum K.A."/>
            <person name="Hood D.W."/>
            <person name="Peden J.F."/>
            <person name="Dodson R.J."/>
            <person name="Nelson W.C."/>
            <person name="Gwinn M.L."/>
            <person name="DeBoy R.T."/>
            <person name="Peterson J.D."/>
            <person name="Hickey E.K."/>
            <person name="Haft D.H."/>
            <person name="Salzberg S.L."/>
            <person name="White O."/>
            <person name="Fleischmann R.D."/>
            <person name="Dougherty B.A."/>
            <person name="Mason T.M."/>
            <person name="Ciecko A."/>
            <person name="Parksey D.S."/>
            <person name="Blair E."/>
            <person name="Cittone H."/>
            <person name="Clark E.B."/>
            <person name="Cotton M.D."/>
            <person name="Utterback T.R."/>
            <person name="Khouri H.M."/>
            <person name="Qin H."/>
            <person name="Vamathevan J.J."/>
            <person name="Gill J."/>
            <person name="Scarlato V."/>
            <person name="Masignani V."/>
            <person name="Pizza M."/>
            <person name="Grandi G."/>
            <person name="Sun L."/>
            <person name="Smith H.O."/>
            <person name="Fraser C.M."/>
            <person name="Moxon E.R."/>
            <person name="Rappuoli R."/>
            <person name="Venter J.C."/>
        </authorList>
    </citation>
    <scope>NUCLEOTIDE SEQUENCE [LARGE SCALE GENOMIC DNA]</scope>
    <source>
        <strain>ATCC BAA-335 / MC58</strain>
    </source>
</reference>
<accession>P66333</accession>
<accession>Q9JR21</accession>
<gene>
    <name evidence="1" type="primary">rpsJ</name>
    <name type="ordered locus">NMB0140</name>
</gene>
<dbReference type="EMBL" id="AE002098">
    <property type="protein sequence ID" value="AAF40599.1"/>
    <property type="molecule type" value="Genomic_DNA"/>
</dbReference>
<dbReference type="PIR" id="E81234">
    <property type="entry name" value="E81234"/>
</dbReference>
<dbReference type="RefSeq" id="NP_273198.1">
    <property type="nucleotide sequence ID" value="NC_003112.2"/>
</dbReference>
<dbReference type="RefSeq" id="WP_002215394.1">
    <property type="nucleotide sequence ID" value="NC_003112.2"/>
</dbReference>
<dbReference type="SMR" id="P66333"/>
<dbReference type="FunCoup" id="P66333">
    <property type="interactions" value="599"/>
</dbReference>
<dbReference type="STRING" id="122586.NMB0140"/>
<dbReference type="PaxDb" id="122586-NMB0140"/>
<dbReference type="GeneID" id="93387214"/>
<dbReference type="KEGG" id="nme:NMB0140"/>
<dbReference type="PATRIC" id="fig|122586.8.peg.180"/>
<dbReference type="HOGENOM" id="CLU_122625_1_3_4"/>
<dbReference type="InParanoid" id="P66333"/>
<dbReference type="OrthoDB" id="9804464at2"/>
<dbReference type="Proteomes" id="UP000000425">
    <property type="component" value="Chromosome"/>
</dbReference>
<dbReference type="GO" id="GO:0015935">
    <property type="term" value="C:small ribosomal subunit"/>
    <property type="evidence" value="ECO:0000318"/>
    <property type="project" value="GO_Central"/>
</dbReference>
<dbReference type="GO" id="GO:0003735">
    <property type="term" value="F:structural constituent of ribosome"/>
    <property type="evidence" value="ECO:0000318"/>
    <property type="project" value="GO_Central"/>
</dbReference>
<dbReference type="GO" id="GO:0000049">
    <property type="term" value="F:tRNA binding"/>
    <property type="evidence" value="ECO:0007669"/>
    <property type="project" value="UniProtKB-UniRule"/>
</dbReference>
<dbReference type="GO" id="GO:0006412">
    <property type="term" value="P:translation"/>
    <property type="evidence" value="ECO:0007669"/>
    <property type="project" value="UniProtKB-UniRule"/>
</dbReference>
<dbReference type="FunFam" id="3.30.70.600:FF:000001">
    <property type="entry name" value="30S ribosomal protein S10"/>
    <property type="match status" value="1"/>
</dbReference>
<dbReference type="Gene3D" id="3.30.70.600">
    <property type="entry name" value="Ribosomal protein S10 domain"/>
    <property type="match status" value="1"/>
</dbReference>
<dbReference type="HAMAP" id="MF_00508">
    <property type="entry name" value="Ribosomal_uS10"/>
    <property type="match status" value="1"/>
</dbReference>
<dbReference type="InterPro" id="IPR001848">
    <property type="entry name" value="Ribosomal_uS10"/>
</dbReference>
<dbReference type="InterPro" id="IPR018268">
    <property type="entry name" value="Ribosomal_uS10_CS"/>
</dbReference>
<dbReference type="InterPro" id="IPR027486">
    <property type="entry name" value="Ribosomal_uS10_dom"/>
</dbReference>
<dbReference type="InterPro" id="IPR036838">
    <property type="entry name" value="Ribosomal_uS10_dom_sf"/>
</dbReference>
<dbReference type="NCBIfam" id="NF001861">
    <property type="entry name" value="PRK00596.1"/>
    <property type="match status" value="1"/>
</dbReference>
<dbReference type="NCBIfam" id="TIGR01049">
    <property type="entry name" value="rpsJ_bact"/>
    <property type="match status" value="1"/>
</dbReference>
<dbReference type="PANTHER" id="PTHR11700">
    <property type="entry name" value="30S RIBOSOMAL PROTEIN S10 FAMILY MEMBER"/>
    <property type="match status" value="1"/>
</dbReference>
<dbReference type="Pfam" id="PF00338">
    <property type="entry name" value="Ribosomal_S10"/>
    <property type="match status" value="1"/>
</dbReference>
<dbReference type="PRINTS" id="PR00971">
    <property type="entry name" value="RIBOSOMALS10"/>
</dbReference>
<dbReference type="SMART" id="SM01403">
    <property type="entry name" value="Ribosomal_S10"/>
    <property type="match status" value="1"/>
</dbReference>
<dbReference type="SUPFAM" id="SSF54999">
    <property type="entry name" value="Ribosomal protein S10"/>
    <property type="match status" value="1"/>
</dbReference>
<dbReference type="PROSITE" id="PS00361">
    <property type="entry name" value="RIBOSOMAL_S10"/>
    <property type="match status" value="1"/>
</dbReference>
<proteinExistence type="inferred from homology"/>
<protein>
    <recommendedName>
        <fullName evidence="1">Small ribosomal subunit protein uS10</fullName>
    </recommendedName>
    <alternativeName>
        <fullName evidence="2">30S ribosomal protein S10</fullName>
    </alternativeName>
</protein>
<sequence>MANQKIRIRLKAYDYALIDRSAQEIVETAKRTGAVVKGPIPLPTKIERFNILRSPHVNKTSREQLEIRTHLRLMDIVDWTDKTTDALMKLDLPAGVDVEIKVQ</sequence>
<feature type="chain" id="PRO_0000146564" description="Small ribosomal subunit protein uS10">
    <location>
        <begin position="1"/>
        <end position="103"/>
    </location>
</feature>
<evidence type="ECO:0000255" key="1">
    <source>
        <dbReference type="HAMAP-Rule" id="MF_00508"/>
    </source>
</evidence>
<evidence type="ECO:0000305" key="2"/>
<name>RS10_NEIMB</name>